<sequence length="635" mass="70258">MDEESTKERLIPREYGESLDLGIDFKTTEEIPVPEKLIDQVIGQEHAVEVIKTAANQRRHVLLIGEPGTGKSMLGQAMAELLPTENLEDILVFPNPEDENMPKIKTVPACQGRRIVENYRRKAKEQEGIKNYLLMFVIFTVILAIIMEPTATTLLMGMFVVLLSMMVLSNMRFRNTVLVPKLLVDNCGRKKAPFVDATGAHAGALLGDVRHDPFQSGGLGTPAHERVEPGMIHRAHKGVLFIDEIATLSLKMQQSLLTAMQEKKFPITGQSEMSSGAMVRTEPVPCDFILVAAGNLDTIDKMHPALRSRIRGYGYEVYMRTTMPDTIENRRKLVQFVAQEVKRDGKIPHFTREAVEEIVREAQKRAGRKGHLTLRLRDLGGIVRAAGDIAIKKGKKYVEREDVLEAMRMAKPLEKQLADWYIENKKEYQVIKTEGGEIGRVNGLAVIGEQSGIVLPIEAVVAPAASKEEGKIIVTGKLGEIAKEAVQNVSAIIKRYKGEDISRYDIHVQFLQTYEGVEGDSASISVATAVISALENIPIRQDVAMTGSLSVRGEVLPIGGATPKIEAAIEAGIKKVIIPKANEKDVFLSPDKAEKIEIYPVETIDQVLEIALQDGPEKDELLRRIREALPLYGSS</sequence>
<organism>
    <name type="scientific">Thermococcus kodakarensis (strain ATCC BAA-918 / JCM 12380 / KOD1)</name>
    <name type="common">Pyrococcus kodakaraensis (strain KOD1)</name>
    <dbReference type="NCBI Taxonomy" id="69014"/>
    <lineage>
        <taxon>Archaea</taxon>
        <taxon>Methanobacteriati</taxon>
        <taxon>Methanobacteriota</taxon>
        <taxon>Thermococci</taxon>
        <taxon>Thermococcales</taxon>
        <taxon>Thermococcaceae</taxon>
        <taxon>Thermococcus</taxon>
    </lineage>
</organism>
<protein>
    <recommendedName>
        <fullName>Archaeal Lon protease</fullName>
        <ecNumber>3.4.21.-</ecNumber>
    </recommendedName>
    <alternativeName>
        <fullName>LonTk</fullName>
    </alternativeName>
</protein>
<gene>
    <name type="primary">lon</name>
    <name type="ordered locus">TK1264</name>
</gene>
<proteinExistence type="evidence at protein level"/>
<dbReference type="EC" id="3.4.21.-"/>
<dbReference type="EMBL" id="AB066562">
    <property type="protein sequence ID" value="BAC00917.1"/>
    <property type="molecule type" value="Genomic_DNA"/>
</dbReference>
<dbReference type="EMBL" id="AP006878">
    <property type="protein sequence ID" value="BAD85453.1"/>
    <property type="molecule type" value="Genomic_DNA"/>
</dbReference>
<dbReference type="RefSeq" id="WP_011250215.1">
    <property type="nucleotide sequence ID" value="NC_006624.1"/>
</dbReference>
<dbReference type="SMR" id="Q8NKS6"/>
<dbReference type="STRING" id="69014.TK1264"/>
<dbReference type="MEROPS" id="S16.A11"/>
<dbReference type="EnsemblBacteria" id="BAD85453">
    <property type="protein sequence ID" value="BAD85453"/>
    <property type="gene ID" value="TK1264"/>
</dbReference>
<dbReference type="GeneID" id="78447781"/>
<dbReference type="KEGG" id="tko:TK1264"/>
<dbReference type="PATRIC" id="fig|69014.16.peg.1237"/>
<dbReference type="eggNOG" id="arCOG02160">
    <property type="taxonomic scope" value="Archaea"/>
</dbReference>
<dbReference type="HOGENOM" id="CLU_392630_0_0_2"/>
<dbReference type="InParanoid" id="Q8NKS6"/>
<dbReference type="OrthoDB" id="64652at2157"/>
<dbReference type="PhylomeDB" id="Q8NKS6"/>
<dbReference type="BRENDA" id="3.4.21.53">
    <property type="organism ID" value="5246"/>
</dbReference>
<dbReference type="Proteomes" id="UP000000536">
    <property type="component" value="Chromosome"/>
</dbReference>
<dbReference type="GO" id="GO:0005886">
    <property type="term" value="C:plasma membrane"/>
    <property type="evidence" value="ECO:0007669"/>
    <property type="project" value="UniProtKB-SubCell"/>
</dbReference>
<dbReference type="GO" id="GO:0005524">
    <property type="term" value="F:ATP binding"/>
    <property type="evidence" value="ECO:0007669"/>
    <property type="project" value="UniProtKB-KW"/>
</dbReference>
<dbReference type="GO" id="GO:0016887">
    <property type="term" value="F:ATP hydrolysis activity"/>
    <property type="evidence" value="ECO:0007669"/>
    <property type="project" value="InterPro"/>
</dbReference>
<dbReference type="GO" id="GO:0004176">
    <property type="term" value="F:ATP-dependent peptidase activity"/>
    <property type="evidence" value="ECO:0007669"/>
    <property type="project" value="InterPro"/>
</dbReference>
<dbReference type="GO" id="GO:0004252">
    <property type="term" value="F:serine-type endopeptidase activity"/>
    <property type="evidence" value="ECO:0007669"/>
    <property type="project" value="InterPro"/>
</dbReference>
<dbReference type="GO" id="GO:0030163">
    <property type="term" value="P:protein catabolic process"/>
    <property type="evidence" value="ECO:0007669"/>
    <property type="project" value="InterPro"/>
</dbReference>
<dbReference type="GO" id="GO:0006508">
    <property type="term" value="P:proteolysis"/>
    <property type="evidence" value="ECO:0007669"/>
    <property type="project" value="UniProtKB-KW"/>
</dbReference>
<dbReference type="GO" id="GO:0006355">
    <property type="term" value="P:regulation of DNA-templated transcription"/>
    <property type="evidence" value="ECO:0007669"/>
    <property type="project" value="InterPro"/>
</dbReference>
<dbReference type="Gene3D" id="1.10.8.60">
    <property type="match status" value="1"/>
</dbReference>
<dbReference type="Gene3D" id="3.30.230.10">
    <property type="match status" value="1"/>
</dbReference>
<dbReference type="Gene3D" id="3.40.50.300">
    <property type="entry name" value="P-loop containing nucleotide triphosphate hydrolases"/>
    <property type="match status" value="2"/>
</dbReference>
<dbReference type="InterPro" id="IPR003593">
    <property type="entry name" value="AAA+_ATPase"/>
</dbReference>
<dbReference type="InterPro" id="IPR004663">
    <property type="entry name" value="Lon_arc"/>
</dbReference>
<dbReference type="InterPro" id="IPR008269">
    <property type="entry name" value="Lon_proteolytic"/>
</dbReference>
<dbReference type="InterPro" id="IPR027065">
    <property type="entry name" value="Lon_Prtase"/>
</dbReference>
<dbReference type="InterPro" id="IPR046843">
    <property type="entry name" value="LonB_AAA-LID"/>
</dbReference>
<dbReference type="InterPro" id="IPR000523">
    <property type="entry name" value="Mg_chelatse_chII-like_cat_dom"/>
</dbReference>
<dbReference type="InterPro" id="IPR027417">
    <property type="entry name" value="P-loop_NTPase"/>
</dbReference>
<dbReference type="InterPro" id="IPR020568">
    <property type="entry name" value="Ribosomal_Su5_D2-typ_SF"/>
</dbReference>
<dbReference type="InterPro" id="IPR014721">
    <property type="entry name" value="Ribsml_uS5_D2-typ_fold_subgr"/>
</dbReference>
<dbReference type="InterPro" id="IPR002078">
    <property type="entry name" value="Sigma_54_int"/>
</dbReference>
<dbReference type="NCBIfam" id="TIGR00764">
    <property type="entry name" value="lon_rel"/>
    <property type="match status" value="1"/>
</dbReference>
<dbReference type="PANTHER" id="PTHR10046">
    <property type="entry name" value="ATP DEPENDENT LON PROTEASE FAMILY MEMBER"/>
    <property type="match status" value="1"/>
</dbReference>
<dbReference type="Pfam" id="PF05362">
    <property type="entry name" value="Lon_C"/>
    <property type="match status" value="1"/>
</dbReference>
<dbReference type="Pfam" id="PF20436">
    <property type="entry name" value="LonB_AAA-LID"/>
    <property type="match status" value="1"/>
</dbReference>
<dbReference type="Pfam" id="PF01078">
    <property type="entry name" value="Mg_chelatase"/>
    <property type="match status" value="1"/>
</dbReference>
<dbReference type="Pfam" id="PF00158">
    <property type="entry name" value="Sigma54_activat"/>
    <property type="match status" value="1"/>
</dbReference>
<dbReference type="PRINTS" id="PR00830">
    <property type="entry name" value="ENDOLAPTASE"/>
</dbReference>
<dbReference type="SMART" id="SM00382">
    <property type="entry name" value="AAA"/>
    <property type="match status" value="1"/>
</dbReference>
<dbReference type="SUPFAM" id="SSF52540">
    <property type="entry name" value="P-loop containing nucleoside triphosphate hydrolases"/>
    <property type="match status" value="1"/>
</dbReference>
<dbReference type="SUPFAM" id="SSF54211">
    <property type="entry name" value="Ribosomal protein S5 domain 2-like"/>
    <property type="match status" value="1"/>
</dbReference>
<dbReference type="PROSITE" id="PS51786">
    <property type="entry name" value="LON_PROTEOLYTIC"/>
    <property type="match status" value="1"/>
</dbReference>
<evidence type="ECO:0000250" key="1"/>
<evidence type="ECO:0000255" key="2"/>
<evidence type="ECO:0000255" key="3">
    <source>
        <dbReference type="PROSITE-ProRule" id="PRU01122"/>
    </source>
</evidence>
<evidence type="ECO:0000269" key="4">
    <source>
    </source>
</evidence>
<evidence type="ECO:0000305" key="5"/>
<keyword id="KW-0067">ATP-binding</keyword>
<keyword id="KW-1003">Cell membrane</keyword>
<keyword id="KW-0903">Direct protein sequencing</keyword>
<keyword id="KW-0378">Hydrolase</keyword>
<keyword id="KW-0460">Magnesium</keyword>
<keyword id="KW-0472">Membrane</keyword>
<keyword id="KW-0547">Nucleotide-binding</keyword>
<keyword id="KW-0645">Protease</keyword>
<keyword id="KW-1185">Reference proteome</keyword>
<keyword id="KW-0720">Serine protease</keyword>
<keyword id="KW-0812">Transmembrane</keyword>
<keyword id="KW-1133">Transmembrane helix</keyword>
<reference key="1">
    <citation type="journal article" date="2002" name="J. Bacteriol.">
        <title>A membrane-bound archaeal Lon protease displays ATP-independent proteolytic activity towards unfolded proteins and ATP-dependent activity for folded proteins.</title>
        <authorList>
            <person name="Fukui T."/>
            <person name="Eguchi T."/>
            <person name="Atomi H."/>
            <person name="Imanaka T."/>
        </authorList>
    </citation>
    <scope>NUCLEOTIDE SEQUENCE [GENOMIC DNA]</scope>
    <scope>PROTEIN SEQUENCE OF N-TERMINUS</scope>
    <scope>FUNCTION</scope>
    <scope>CATALYTIC ACTIVITY</scope>
    <scope>COFACTOR</scope>
    <scope>BIOPHYSICOCHEMICAL PROPERTIES</scope>
    <scope>ACTIVITY REGULATION</scope>
    <scope>SUBCELLULAR LOCATION</scope>
    <scope>DOMAIN</scope>
    <source>
        <strain>ATCC BAA-918 / JCM 12380 / KOD1</strain>
    </source>
</reference>
<reference key="2">
    <citation type="journal article" date="2005" name="Genome Res.">
        <title>Complete genome sequence of the hyperthermophilic archaeon Thermococcus kodakaraensis KOD1 and comparison with Pyrococcus genomes.</title>
        <authorList>
            <person name="Fukui T."/>
            <person name="Atomi H."/>
            <person name="Kanai T."/>
            <person name="Matsumi R."/>
            <person name="Fujiwara S."/>
            <person name="Imanaka T."/>
        </authorList>
    </citation>
    <scope>NUCLEOTIDE SEQUENCE [LARGE SCALE GENOMIC DNA]</scope>
    <source>
        <strain>ATCC BAA-918 / JCM 12380 / KOD1</strain>
    </source>
</reference>
<feature type="chain" id="PRO_0000429042" description="Archaeal Lon protease">
    <location>
        <begin position="1"/>
        <end position="635"/>
    </location>
</feature>
<feature type="topological domain" description="Cytoplasmic" evidence="2">
    <location>
        <begin position="1"/>
        <end position="131"/>
    </location>
</feature>
<feature type="transmembrane region" description="Helical" evidence="2">
    <location>
        <begin position="132"/>
        <end position="152"/>
    </location>
</feature>
<feature type="transmembrane region" description="Helical" evidence="2">
    <location>
        <begin position="153"/>
        <end position="173"/>
    </location>
</feature>
<feature type="topological domain" description="Cytoplasmic" evidence="2">
    <location>
        <begin position="174"/>
        <end position="635"/>
    </location>
</feature>
<feature type="domain" description="Lon proteolytic" evidence="3">
    <location>
        <begin position="435"/>
        <end position="614"/>
    </location>
</feature>
<feature type="active site" description="Nucleophile" evidence="1">
    <location>
        <position position="521"/>
    </location>
</feature>
<feature type="active site" evidence="1">
    <location>
        <position position="564"/>
    </location>
</feature>
<feature type="binding site" evidence="2">
    <location>
        <begin position="65"/>
        <end position="72"/>
    </location>
    <ligand>
        <name>ATP</name>
        <dbReference type="ChEBI" id="CHEBI:30616"/>
    </ligand>
</feature>
<accession>Q8NKS6</accession>
<accession>Q5JGL4</accession>
<name>LONB_THEKO</name>
<comment type="function">
    <text evidence="4">Serine protease that displays ATP-independent proteolytic activity towards peptides and unfolded proteins and ATP-dependent activity for the cleavage of folded proteins.</text>
</comment>
<comment type="cofactor">
    <cofactor evidence="4">
        <name>Mg(2+)</name>
        <dbReference type="ChEBI" id="CHEBI:18420"/>
    </cofactor>
    <cofactor evidence="4">
        <name>Ni(2+)</name>
        <dbReference type="ChEBI" id="CHEBI:49786"/>
    </cofactor>
    <cofactor evidence="4">
        <name>Ca(2+)</name>
        <dbReference type="ChEBI" id="CHEBI:29108"/>
    </cofactor>
    <cofactor evidence="4">
        <name>Mn(2+)</name>
        <dbReference type="ChEBI" id="CHEBI:29035"/>
    </cofactor>
    <cofactor evidence="4">
        <name>Co(2+)</name>
        <dbReference type="ChEBI" id="CHEBI:48828"/>
    </cofactor>
    <text evidence="4">Mg(2+). Exhibits no peptide cleavage activity without Mg(2+), regardless of the presence or the absence of ATP. Can also use other divalent cations such as Ni(2+), Ca(2+), Mn(2+) and Co(2+).</text>
</comment>
<comment type="activity regulation">
    <text evidence="4">ADP inhibits the peptide cleavage activity of LonTk, but the enzyme retains 57% activity in comparison to the condition with the addition of ATP.</text>
</comment>
<comment type="biophysicochemical properties">
    <phDependence>
        <text evidence="4">Optimum pH is 9 for the ATP-independent peptide cleavage activity and for ATPase activity.</text>
    </phDependence>
    <temperatureDependence>
        <text evidence="4">Optimum temperature is 70 degrees Celsius for the ATP-independent peptide cleavage activity, and 95 degrees Celsius for ATPase activity.</text>
    </temperatureDependence>
</comment>
<comment type="subunit">
    <text evidence="1">Homohexamer. Organized in a ring with a central cavity (By similarity).</text>
</comment>
<comment type="subcellular location">
    <subcellularLocation>
        <location evidence="4">Cell membrane</location>
        <topology evidence="4">Multi-pass membrane protein</topology>
    </subcellularLocation>
</comment>
<comment type="domain">
    <text evidence="4">Possesses a two-domain structure consisting of an N-terminal ATPase domain belonging to the AAA(+) superfamily and a C-terminal protease domain. The ATPase domain likely acts as a molecular chaperone functioning in the unfolding of protein structures, along with ATP hydrolysis.</text>
</comment>
<comment type="similarity">
    <text evidence="5">Belongs to the peptidase S16 family. Archaeal LonB subfamily.</text>
</comment>